<reference key="1">
    <citation type="journal article" date="2000" name="Nature">
        <title>Sequence and analysis of chromosome 1 of the plant Arabidopsis thaliana.</title>
        <authorList>
            <person name="Theologis A."/>
            <person name="Ecker J.R."/>
            <person name="Palm C.J."/>
            <person name="Federspiel N.A."/>
            <person name="Kaul S."/>
            <person name="White O."/>
            <person name="Alonso J."/>
            <person name="Altafi H."/>
            <person name="Araujo R."/>
            <person name="Bowman C.L."/>
            <person name="Brooks S.Y."/>
            <person name="Buehler E."/>
            <person name="Chan A."/>
            <person name="Chao Q."/>
            <person name="Chen H."/>
            <person name="Cheuk R.F."/>
            <person name="Chin C.W."/>
            <person name="Chung M.K."/>
            <person name="Conn L."/>
            <person name="Conway A.B."/>
            <person name="Conway A.R."/>
            <person name="Creasy T.H."/>
            <person name="Dewar K."/>
            <person name="Dunn P."/>
            <person name="Etgu P."/>
            <person name="Feldblyum T.V."/>
            <person name="Feng J.-D."/>
            <person name="Fong B."/>
            <person name="Fujii C.Y."/>
            <person name="Gill J.E."/>
            <person name="Goldsmith A.D."/>
            <person name="Haas B."/>
            <person name="Hansen N.F."/>
            <person name="Hughes B."/>
            <person name="Huizar L."/>
            <person name="Hunter J.L."/>
            <person name="Jenkins J."/>
            <person name="Johnson-Hopson C."/>
            <person name="Khan S."/>
            <person name="Khaykin E."/>
            <person name="Kim C.J."/>
            <person name="Koo H.L."/>
            <person name="Kremenetskaia I."/>
            <person name="Kurtz D.B."/>
            <person name="Kwan A."/>
            <person name="Lam B."/>
            <person name="Langin-Hooper S."/>
            <person name="Lee A."/>
            <person name="Lee J.M."/>
            <person name="Lenz C.A."/>
            <person name="Li J.H."/>
            <person name="Li Y.-P."/>
            <person name="Lin X."/>
            <person name="Liu S.X."/>
            <person name="Liu Z.A."/>
            <person name="Luros J.S."/>
            <person name="Maiti R."/>
            <person name="Marziali A."/>
            <person name="Militscher J."/>
            <person name="Miranda M."/>
            <person name="Nguyen M."/>
            <person name="Nierman W.C."/>
            <person name="Osborne B.I."/>
            <person name="Pai G."/>
            <person name="Peterson J."/>
            <person name="Pham P.K."/>
            <person name="Rizzo M."/>
            <person name="Rooney T."/>
            <person name="Rowley D."/>
            <person name="Sakano H."/>
            <person name="Salzberg S.L."/>
            <person name="Schwartz J.R."/>
            <person name="Shinn P."/>
            <person name="Southwick A.M."/>
            <person name="Sun H."/>
            <person name="Tallon L.J."/>
            <person name="Tambunga G."/>
            <person name="Toriumi M.J."/>
            <person name="Town C.D."/>
            <person name="Utterback T."/>
            <person name="Van Aken S."/>
            <person name="Vaysberg M."/>
            <person name="Vysotskaia V.S."/>
            <person name="Walker M."/>
            <person name="Wu D."/>
            <person name="Yu G."/>
            <person name="Fraser C.M."/>
            <person name="Venter J.C."/>
            <person name="Davis R.W."/>
        </authorList>
    </citation>
    <scope>NUCLEOTIDE SEQUENCE [LARGE SCALE GENOMIC DNA]</scope>
    <source>
        <strain>cv. Columbia</strain>
    </source>
</reference>
<reference key="2">
    <citation type="journal article" date="2017" name="Plant J.">
        <title>Araport11: a complete reannotation of the Arabidopsis thaliana reference genome.</title>
        <authorList>
            <person name="Cheng C.Y."/>
            <person name="Krishnakumar V."/>
            <person name="Chan A.P."/>
            <person name="Thibaud-Nissen F."/>
            <person name="Schobel S."/>
            <person name="Town C.D."/>
        </authorList>
    </citation>
    <scope>GENOME REANNOTATION</scope>
    <source>
        <strain>cv. Columbia</strain>
    </source>
</reference>
<reference key="3">
    <citation type="journal article" date="2002" name="Science">
        <title>Functional annotation of a full-length Arabidopsis cDNA collection.</title>
        <authorList>
            <person name="Seki M."/>
            <person name="Narusaka M."/>
            <person name="Kamiya A."/>
            <person name="Ishida J."/>
            <person name="Satou M."/>
            <person name="Sakurai T."/>
            <person name="Nakajima M."/>
            <person name="Enju A."/>
            <person name="Akiyama K."/>
            <person name="Oono Y."/>
            <person name="Muramatsu M."/>
            <person name="Hayashizaki Y."/>
            <person name="Kawai J."/>
            <person name="Carninci P."/>
            <person name="Itoh M."/>
            <person name="Ishii Y."/>
            <person name="Arakawa T."/>
            <person name="Shibata K."/>
            <person name="Shinagawa A."/>
            <person name="Shinozaki K."/>
        </authorList>
    </citation>
    <scope>NUCLEOTIDE SEQUENCE [LARGE SCALE MRNA]</scope>
    <source>
        <strain>cv. Columbia</strain>
    </source>
</reference>
<reference key="4">
    <citation type="journal article" date="2003" name="Science">
        <title>Empirical analysis of transcriptional activity in the Arabidopsis genome.</title>
        <authorList>
            <person name="Yamada K."/>
            <person name="Lim J."/>
            <person name="Dale J.M."/>
            <person name="Chen H."/>
            <person name="Shinn P."/>
            <person name="Palm C.J."/>
            <person name="Southwick A.M."/>
            <person name="Wu H.C."/>
            <person name="Kim C.J."/>
            <person name="Nguyen M."/>
            <person name="Pham P.K."/>
            <person name="Cheuk R.F."/>
            <person name="Karlin-Newmann G."/>
            <person name="Liu S.X."/>
            <person name="Lam B."/>
            <person name="Sakano H."/>
            <person name="Wu T."/>
            <person name="Yu G."/>
            <person name="Miranda M."/>
            <person name="Quach H.L."/>
            <person name="Tripp M."/>
            <person name="Chang C.H."/>
            <person name="Lee J.M."/>
            <person name="Toriumi M.J."/>
            <person name="Chan M.M."/>
            <person name="Tang C.C."/>
            <person name="Onodera C.S."/>
            <person name="Deng J.M."/>
            <person name="Akiyama K."/>
            <person name="Ansari Y."/>
            <person name="Arakawa T."/>
            <person name="Banh J."/>
            <person name="Banno F."/>
            <person name="Bowser L."/>
            <person name="Brooks S.Y."/>
            <person name="Carninci P."/>
            <person name="Chao Q."/>
            <person name="Choy N."/>
            <person name="Enju A."/>
            <person name="Goldsmith A.D."/>
            <person name="Gurjal M."/>
            <person name="Hansen N.F."/>
            <person name="Hayashizaki Y."/>
            <person name="Johnson-Hopson C."/>
            <person name="Hsuan V.W."/>
            <person name="Iida K."/>
            <person name="Karnes M."/>
            <person name="Khan S."/>
            <person name="Koesema E."/>
            <person name="Ishida J."/>
            <person name="Jiang P.X."/>
            <person name="Jones T."/>
            <person name="Kawai J."/>
            <person name="Kamiya A."/>
            <person name="Meyers C."/>
            <person name="Nakajima M."/>
            <person name="Narusaka M."/>
            <person name="Seki M."/>
            <person name="Sakurai T."/>
            <person name="Satou M."/>
            <person name="Tamse R."/>
            <person name="Vaysberg M."/>
            <person name="Wallender E.K."/>
            <person name="Wong C."/>
            <person name="Yamamura Y."/>
            <person name="Yuan S."/>
            <person name="Shinozaki K."/>
            <person name="Davis R.W."/>
            <person name="Theologis A."/>
            <person name="Ecker J.R."/>
        </authorList>
    </citation>
    <scope>NUCLEOTIDE SEQUENCE [LARGE SCALE MRNA]</scope>
    <source>
        <strain>cv. Columbia</strain>
    </source>
</reference>
<reference key="5">
    <citation type="submission" date="2005-03" db="EMBL/GenBank/DDBJ databases">
        <title>Large-scale analysis of RIKEN Arabidopsis full-length (RAFL) cDNAs.</title>
        <authorList>
            <person name="Totoki Y."/>
            <person name="Seki M."/>
            <person name="Ishida J."/>
            <person name="Nakajima M."/>
            <person name="Enju A."/>
            <person name="Kamiya A."/>
            <person name="Narusaka M."/>
            <person name="Shin-i T."/>
            <person name="Nakagawa M."/>
            <person name="Sakamoto N."/>
            <person name="Oishi K."/>
            <person name="Kohara Y."/>
            <person name="Kobayashi M."/>
            <person name="Toyoda A."/>
            <person name="Sakaki Y."/>
            <person name="Sakurai T."/>
            <person name="Iida K."/>
            <person name="Akiyama K."/>
            <person name="Satou M."/>
            <person name="Toyoda T."/>
            <person name="Konagaya A."/>
            <person name="Carninci P."/>
            <person name="Kawai J."/>
            <person name="Hayashizaki Y."/>
            <person name="Shinozaki K."/>
        </authorList>
    </citation>
    <scope>NUCLEOTIDE SEQUENCE [LARGE SCALE MRNA]</scope>
    <source>
        <strain>cv. Columbia</strain>
    </source>
</reference>
<reference key="6">
    <citation type="journal article" date="2005" name="Plant Physiol.">
        <title>Phylogenomic analysis of the receptor-like proteins of rice and Arabidopsis.</title>
        <authorList>
            <person name="Fritz-Laylin L.K."/>
            <person name="Krishnamurthy N."/>
            <person name="Toer M."/>
            <person name="Sjoelander K.V."/>
            <person name="Jones J.D."/>
        </authorList>
    </citation>
    <scope>GENE FAMILY</scope>
</reference>
<reference key="7">
    <citation type="journal article" date="2008" name="Plant Physiol.">
        <title>A genome-wide functional investigation into the roles of receptor-like proteins in Arabidopsis.</title>
        <authorList>
            <person name="Wang G."/>
            <person name="Ellendorff U."/>
            <person name="Kemp B."/>
            <person name="Mansfield J.W."/>
            <person name="Forsyth A."/>
            <person name="Mitchell K."/>
            <person name="Bastas K."/>
            <person name="Liu C.-M."/>
            <person name="Woods-Toer A."/>
            <person name="Zipfel C."/>
            <person name="de Wit P.J.G.M."/>
            <person name="Jones J.D.G."/>
            <person name="Toer M."/>
            <person name="Thomma B.P.H.J."/>
        </authorList>
    </citation>
    <scope>GENE FAMILY</scope>
    <scope>NOMENCLATURE</scope>
</reference>
<protein>
    <recommendedName>
        <fullName evidence="4">Receptor-like protein 9a</fullName>
        <shortName evidence="4">AtRLP9a</shortName>
    </recommendedName>
    <alternativeName>
        <fullName evidence="3">Receptor like protein 9</fullName>
        <shortName evidence="3">AtRLP9</shortName>
    </alternativeName>
</protein>
<dbReference type="EMBL" id="AC079131">
    <property type="protein sequence ID" value="AAG50756.1"/>
    <property type="status" value="ALT_SEQ"/>
    <property type="molecule type" value="Genomic_DNA"/>
</dbReference>
<dbReference type="EMBL" id="AC079604">
    <property type="protein sequence ID" value="AAG50707.1"/>
    <property type="status" value="ALT_SEQ"/>
    <property type="molecule type" value="Genomic_DNA"/>
</dbReference>
<dbReference type="EMBL" id="CP002684">
    <property type="protein sequence ID" value="AEE33510.1"/>
    <property type="molecule type" value="Genomic_DNA"/>
</dbReference>
<dbReference type="EMBL" id="CP002684">
    <property type="protein sequence ID" value="AEE33511.1"/>
    <property type="status" value="ALT_SEQ"/>
    <property type="molecule type" value="Genomic_DNA"/>
</dbReference>
<dbReference type="EMBL" id="AK117213">
    <property type="protein sequence ID" value="BAC41889.1"/>
    <property type="molecule type" value="mRNA"/>
</dbReference>
<dbReference type="EMBL" id="BT005976">
    <property type="protein sequence ID" value="AAO64911.1"/>
    <property type="molecule type" value="mRNA"/>
</dbReference>
<dbReference type="EMBL" id="AK221253">
    <property type="protein sequence ID" value="BAD93894.1"/>
    <property type="molecule type" value="mRNA"/>
</dbReference>
<dbReference type="PIR" id="C96615">
    <property type="entry name" value="C96615"/>
</dbReference>
<dbReference type="RefSeq" id="NP_176115.2">
    <property type="nucleotide sequence ID" value="NM_104600.3"/>
</dbReference>
<dbReference type="SMR" id="F4I9S3"/>
<dbReference type="FunCoup" id="F4I9S3">
    <property type="interactions" value="73"/>
</dbReference>
<dbReference type="STRING" id="3702.F4I9S3"/>
<dbReference type="GlyCosmos" id="F4I9S3">
    <property type="glycosylation" value="22 sites, No reported glycans"/>
</dbReference>
<dbReference type="GlyGen" id="F4I9S3">
    <property type="glycosylation" value="22 sites"/>
</dbReference>
<dbReference type="ProteomicsDB" id="228110"/>
<dbReference type="EnsemblPlants" id="AT1G58190.1">
    <property type="protein sequence ID" value="AT1G58190.1"/>
    <property type="gene ID" value="AT1G58190"/>
</dbReference>
<dbReference type="GeneID" id="842186"/>
<dbReference type="Gramene" id="AT1G58190.1">
    <property type="protein sequence ID" value="AT1G58190.1"/>
    <property type="gene ID" value="AT1G58190"/>
</dbReference>
<dbReference type="Araport" id="AT1G58190"/>
<dbReference type="TAIR" id="AT1G58190">
    <property type="gene designation" value="RLP9"/>
</dbReference>
<dbReference type="InParanoid" id="F4I9S3"/>
<dbReference type="OMA" id="MILPNCN"/>
<dbReference type="PRO" id="PR:F4I9S3"/>
<dbReference type="Proteomes" id="UP000006548">
    <property type="component" value="Chromosome 1"/>
</dbReference>
<dbReference type="ExpressionAtlas" id="F4I9S3">
    <property type="expression patterns" value="baseline and differential"/>
</dbReference>
<dbReference type="GO" id="GO:0005886">
    <property type="term" value="C:plasma membrane"/>
    <property type="evidence" value="ECO:0007669"/>
    <property type="project" value="UniProtKB-SubCell"/>
</dbReference>
<dbReference type="FunFam" id="3.80.10.10:FF:000413">
    <property type="entry name" value="Inactive leucine-rich repeat receptor-like protein kinase"/>
    <property type="match status" value="1"/>
</dbReference>
<dbReference type="FunFam" id="3.80.10.10:FF:000111">
    <property type="entry name" value="LRR receptor-like serine/threonine-protein kinase ERECTA"/>
    <property type="match status" value="1"/>
</dbReference>
<dbReference type="FunFam" id="3.80.10.10:FF:000095">
    <property type="entry name" value="LRR receptor-like serine/threonine-protein kinase GSO1"/>
    <property type="match status" value="1"/>
</dbReference>
<dbReference type="Gene3D" id="3.80.10.10">
    <property type="entry name" value="Ribonuclease Inhibitor"/>
    <property type="match status" value="4"/>
</dbReference>
<dbReference type="InterPro" id="IPR001611">
    <property type="entry name" value="Leu-rich_rpt"/>
</dbReference>
<dbReference type="InterPro" id="IPR003591">
    <property type="entry name" value="Leu-rich_rpt_typical-subtyp"/>
</dbReference>
<dbReference type="InterPro" id="IPR032675">
    <property type="entry name" value="LRR_dom_sf"/>
</dbReference>
<dbReference type="InterPro" id="IPR013210">
    <property type="entry name" value="LRR_N_plant-typ"/>
</dbReference>
<dbReference type="InterPro" id="IPR051502">
    <property type="entry name" value="RLP_Defense_Trigger"/>
</dbReference>
<dbReference type="PANTHER" id="PTHR48062">
    <property type="entry name" value="RECEPTOR-LIKE PROTEIN 14"/>
    <property type="match status" value="1"/>
</dbReference>
<dbReference type="PANTHER" id="PTHR48062:SF25">
    <property type="entry name" value="RECEPTOR-LIKE PROTEIN 9A-RELATED"/>
    <property type="match status" value="1"/>
</dbReference>
<dbReference type="Pfam" id="PF00560">
    <property type="entry name" value="LRR_1"/>
    <property type="match status" value="7"/>
</dbReference>
<dbReference type="Pfam" id="PF13855">
    <property type="entry name" value="LRR_8"/>
    <property type="match status" value="2"/>
</dbReference>
<dbReference type="Pfam" id="PF08263">
    <property type="entry name" value="LRRNT_2"/>
    <property type="match status" value="1"/>
</dbReference>
<dbReference type="SMART" id="SM00365">
    <property type="entry name" value="LRR_SD22"/>
    <property type="match status" value="6"/>
</dbReference>
<dbReference type="SMART" id="SM00369">
    <property type="entry name" value="LRR_TYP"/>
    <property type="match status" value="11"/>
</dbReference>
<dbReference type="SUPFAM" id="SSF52058">
    <property type="entry name" value="L domain-like"/>
    <property type="match status" value="2"/>
</dbReference>
<dbReference type="SUPFAM" id="SSF52047">
    <property type="entry name" value="RNI-like"/>
    <property type="match status" value="1"/>
</dbReference>
<dbReference type="PROSITE" id="PS51450">
    <property type="entry name" value="LRR"/>
    <property type="match status" value="17"/>
</dbReference>
<evidence type="ECO:0000255" key="1"/>
<evidence type="ECO:0000255" key="2">
    <source>
        <dbReference type="PROSITE-ProRule" id="PRU00498"/>
    </source>
</evidence>
<evidence type="ECO:0000303" key="3">
    <source>
    </source>
</evidence>
<evidence type="ECO:0000305" key="4"/>
<evidence type="ECO:0000312" key="5">
    <source>
        <dbReference type="Araport" id="AT1G58190"/>
    </source>
</evidence>
<evidence type="ECO:0000312" key="6">
    <source>
        <dbReference type="EMBL" id="AAG50707.1"/>
    </source>
</evidence>
<evidence type="ECO:0000312" key="7">
    <source>
        <dbReference type="EMBL" id="AAG50756.1"/>
    </source>
</evidence>
<proteinExistence type="evidence at transcript level"/>
<keyword id="KW-1003">Cell membrane</keyword>
<keyword id="KW-0325">Glycoprotein</keyword>
<keyword id="KW-0433">Leucine-rich repeat</keyword>
<keyword id="KW-0472">Membrane</keyword>
<keyword id="KW-0675">Receptor</keyword>
<keyword id="KW-1185">Reference proteome</keyword>
<keyword id="KW-0677">Repeat</keyword>
<keyword id="KW-0732">Signal</keyword>
<keyword id="KW-0812">Transmembrane</keyword>
<keyword id="KW-1133">Transmembrane helix</keyword>
<sequence length="932" mass="105689">MLIFTIPQFFFAAWVMVVSLQMQGYISCIEKERKGLLELKAYVNKEYSYDWSNDTKSDCCRWERVECDRTSGRVIGLFLNQTFSDPILINLSLFHPFEELRTLNLYDFGCTGWFDDIHGYKSLGKLKKLEILDMGNNEVNNSVLPFLNAASSLRTLILHGNNMEGTFPMKELKDLSNLELLDLSGNLLNGPVPGLAVLHKLHALDLSDNTFSGSLGREGLCQLKNLQELDLSQNEFTGPFPQCFSSLTQLQVLDMSSNQFNGTLPSVISNLDSLEYLSLSDNKFEGFFSFDLIANLSKLKVFKLSSKSSLLHIESEISLQLKFRLSVIDLKYCNLEAVPSFLQQQKDLRLINLSNNKLTGISPSWFLENYPKLRVLLLWNNSFTIFHLPRLLVHSLHVLDLSVNKFDEWLPNNIGHVLPNISHLNLSNNGFQGNLPSSFSEMKKIFFLDLSHNNLSGSLPKKFCIGCSSLSILKLSYNRFSGKIFPQPMKLESLRVLIADNNQFTEITDVLIHSKGLVFLELSNNSLQGVIPSWFGGFYFLYLSVSDNLLNGTIPSTLFNVSFQLLDLSRNKFSGNLPSHFSFRHMGLLYLHDNEFSGPVPSTLLENVMLLDLRNNKLSGTIPRFVSNRYFLYLLLRGNALTGHIPTSLCELKSIRVLDLANNRLNGSIPPCLNNVSFGRSLDYEIDPDFGSSYGMVRADQELEESYSRSLVLPLEFELDYSGYLDFTVEFASKRRYDSYMGESFKFMFGLDFSSNELIGEIPRELGDFQRIRALNLSHNSLSGLVPESFSNLTDIESIDLSFNVLHGPIPHDLTKLDYIVVFNVSYNNLSGLIPSQGKFLSLDVTNYIGNPFLCGTTINKSCDDNTSGFKEIDSHSGDDETAIDMETFYWSLFATYGITWMAFIVFLCFDSPWRQAWFRLVNVFVSFLKCV</sequence>
<organism>
    <name type="scientific">Arabidopsis thaliana</name>
    <name type="common">Mouse-ear cress</name>
    <dbReference type="NCBI Taxonomy" id="3702"/>
    <lineage>
        <taxon>Eukaryota</taxon>
        <taxon>Viridiplantae</taxon>
        <taxon>Streptophyta</taxon>
        <taxon>Embryophyta</taxon>
        <taxon>Tracheophyta</taxon>
        <taxon>Spermatophyta</taxon>
        <taxon>Magnoliopsida</taxon>
        <taxon>eudicotyledons</taxon>
        <taxon>Gunneridae</taxon>
        <taxon>Pentapetalae</taxon>
        <taxon>rosids</taxon>
        <taxon>malvids</taxon>
        <taxon>Brassicales</taxon>
        <taxon>Brassicaceae</taxon>
        <taxon>Camelineae</taxon>
        <taxon>Arabidopsis</taxon>
    </lineage>
</organism>
<feature type="signal peptide" evidence="1">
    <location>
        <begin position="1"/>
        <end position="28"/>
    </location>
</feature>
<feature type="chain" id="PRO_5003309592" description="Receptor-like protein 9a">
    <location>
        <begin position="29"/>
        <end position="932"/>
    </location>
</feature>
<feature type="topological domain" description="Extracellular" evidence="1">
    <location>
        <begin position="29"/>
        <end position="888"/>
    </location>
</feature>
<feature type="transmembrane region" description="Helical" evidence="1">
    <location>
        <begin position="889"/>
        <end position="909"/>
    </location>
</feature>
<feature type="topological domain" description="Cytoplasmic" evidence="1">
    <location>
        <begin position="910"/>
        <end position="932"/>
    </location>
</feature>
<feature type="repeat" description="LRR 1" evidence="1">
    <location>
        <begin position="97"/>
        <end position="122"/>
    </location>
</feature>
<feature type="repeat" description="LRR 2" evidence="1">
    <location>
        <begin position="126"/>
        <end position="152"/>
    </location>
</feature>
<feature type="repeat" description="LRR 3" evidence="1">
    <location>
        <begin position="154"/>
        <end position="174"/>
    </location>
</feature>
<feature type="repeat" description="LRR 4" evidence="1">
    <location>
        <begin position="175"/>
        <end position="200"/>
    </location>
</feature>
<feature type="repeat" description="LRR 5" evidence="1">
    <location>
        <begin position="202"/>
        <end position="222"/>
    </location>
</feature>
<feature type="repeat" description="LRR 6" evidence="1">
    <location>
        <begin position="223"/>
        <end position="246"/>
    </location>
</feature>
<feature type="repeat" description="LRR 7" evidence="1">
    <location>
        <begin position="247"/>
        <end position="273"/>
    </location>
</feature>
<feature type="repeat" description="LRR 8" evidence="1">
    <location>
        <begin position="275"/>
        <end position="295"/>
    </location>
</feature>
<feature type="repeat" description="LRR 9" evidence="1">
    <location>
        <begin position="296"/>
        <end position="320"/>
    </location>
</feature>
<feature type="repeat" description="LRR 10" evidence="1">
    <location>
        <begin position="322"/>
        <end position="345"/>
    </location>
</feature>
<feature type="repeat" description="LRR 11" evidence="1">
    <location>
        <begin position="346"/>
        <end position="368"/>
    </location>
</feature>
<feature type="repeat" description="LRR 12" evidence="1">
    <location>
        <begin position="370"/>
        <end position="393"/>
    </location>
</feature>
<feature type="repeat" description="LRR 13" evidence="1">
    <location>
        <begin position="394"/>
        <end position="417"/>
    </location>
</feature>
<feature type="repeat" description="LRR 14" evidence="1">
    <location>
        <begin position="418"/>
        <end position="441"/>
    </location>
</feature>
<feature type="repeat" description="LRR 15" evidence="1">
    <location>
        <begin position="443"/>
        <end position="466"/>
    </location>
</feature>
<feature type="repeat" description="LRR 16" evidence="1">
    <location>
        <begin position="468"/>
        <end position="491"/>
    </location>
</feature>
<feature type="repeat" description="LRR 17" evidence="1">
    <location>
        <begin position="492"/>
        <end position="514"/>
    </location>
</feature>
<feature type="repeat" description="LRR 18" evidence="1">
    <location>
        <begin position="516"/>
        <end position="535"/>
    </location>
</feature>
<feature type="repeat" description="LRR 19" evidence="1">
    <location>
        <begin position="536"/>
        <end position="560"/>
    </location>
</feature>
<feature type="repeat" description="LRR 20" evidence="1">
    <location>
        <begin position="561"/>
        <end position="583"/>
    </location>
</feature>
<feature type="repeat" description="LRR 21" evidence="1">
    <location>
        <begin position="585"/>
        <end position="605"/>
    </location>
</feature>
<feature type="repeat" description="LRR 22" evidence="1">
    <location>
        <begin position="606"/>
        <end position="629"/>
    </location>
</feature>
<feature type="repeat" description="LRR 23" evidence="1">
    <location>
        <begin position="631"/>
        <end position="652"/>
    </location>
</feature>
<feature type="repeat" description="LRR 24" evidence="1">
    <location>
        <begin position="653"/>
        <end position="676"/>
    </location>
</feature>
<feature type="repeat" description="LRR 25" evidence="1">
    <location>
        <begin position="745"/>
        <end position="769"/>
    </location>
</feature>
<feature type="repeat" description="LRR 26" evidence="1">
    <location>
        <begin position="770"/>
        <end position="792"/>
    </location>
</feature>
<feature type="repeat" description="LRR 27" evidence="1">
    <location>
        <begin position="794"/>
        <end position="817"/>
    </location>
</feature>
<feature type="repeat" description="LRR 28" evidence="1">
    <location>
        <begin position="819"/>
        <end position="842"/>
    </location>
</feature>
<feature type="glycosylation site" description="N-linked (GlcNAc...) asparagine" evidence="2">
    <location>
        <position position="53"/>
    </location>
</feature>
<feature type="glycosylation site" description="N-linked (GlcNAc...) asparagine" evidence="2">
    <location>
        <position position="80"/>
    </location>
</feature>
<feature type="glycosylation site" description="N-linked (GlcNAc...) asparagine" evidence="2">
    <location>
        <position position="90"/>
    </location>
</feature>
<feature type="glycosylation site" description="N-linked (GlcNAc...) asparagine" evidence="2">
    <location>
        <position position="140"/>
    </location>
</feature>
<feature type="glycosylation site" description="N-linked (GlcNAc...) asparagine" evidence="2">
    <location>
        <position position="261"/>
    </location>
</feature>
<feature type="glycosylation site" description="N-linked (GlcNAc...) asparagine" evidence="2">
    <location>
        <position position="295"/>
    </location>
</feature>
<feature type="glycosylation site" description="N-linked (GlcNAc...) asparagine" evidence="2">
    <location>
        <position position="352"/>
    </location>
</feature>
<feature type="glycosylation site" description="N-linked (GlcNAc...) asparagine" evidence="2">
    <location>
        <position position="380"/>
    </location>
</feature>
<feature type="glycosylation site" description="N-linked (GlcNAc...) asparagine" evidence="2">
    <location>
        <position position="420"/>
    </location>
</feature>
<feature type="glycosylation site" description="N-linked (GlcNAc...) asparagine" evidence="2">
    <location>
        <position position="425"/>
    </location>
</feature>
<feature type="glycosylation site" description="N-linked (GlcNAc...) asparagine" evidence="2">
    <location>
        <position position="454"/>
    </location>
</feature>
<feature type="glycosylation site" description="N-linked (GlcNAc...) asparagine" evidence="2">
    <location>
        <position position="524"/>
    </location>
</feature>
<feature type="glycosylation site" description="N-linked (GlcNAc...) asparagine" evidence="2">
    <location>
        <position position="551"/>
    </location>
</feature>
<feature type="glycosylation site" description="N-linked (GlcNAc...) asparagine" evidence="2">
    <location>
        <position position="560"/>
    </location>
</feature>
<feature type="glycosylation site" description="N-linked (GlcNAc...) asparagine" evidence="2">
    <location>
        <position position="666"/>
    </location>
</feature>
<feature type="glycosylation site" description="N-linked (GlcNAc...) asparagine" evidence="2">
    <location>
        <position position="675"/>
    </location>
</feature>
<feature type="glycosylation site" description="N-linked (GlcNAc...) asparagine" evidence="2">
    <location>
        <position position="776"/>
    </location>
</feature>
<feature type="glycosylation site" description="N-linked (GlcNAc...) asparagine" evidence="2">
    <location>
        <position position="792"/>
    </location>
</feature>
<feature type="glycosylation site" description="N-linked (GlcNAc...) asparagine" evidence="2">
    <location>
        <position position="824"/>
    </location>
</feature>
<feature type="glycosylation site" description="N-linked (GlcNAc...) asparagine" evidence="2">
    <location>
        <position position="829"/>
    </location>
</feature>
<feature type="glycosylation site" description="N-linked (GlcNAc...) asparagine" evidence="2">
    <location>
        <position position="860"/>
    </location>
</feature>
<feature type="glycosylation site" description="N-linked (GlcNAc...) asparagine" evidence="2">
    <location>
        <position position="866"/>
    </location>
</feature>
<feature type="sequence conflict" description="In Ref. 3; BAC41889, 4; AAO64911 and 5; BAD93894." evidence="4" ref="3 4 5">
    <original>G</original>
    <variation>S</variation>
    <location>
        <position position="165"/>
    </location>
</feature>
<comment type="subcellular location">
    <subcellularLocation>
        <location evidence="4">Cell membrane</location>
        <topology evidence="4">Single-pass type I membrane protein</topology>
    </subcellularLocation>
</comment>
<comment type="similarity">
    <text evidence="4">Belongs to the RLP family.</text>
</comment>
<comment type="sequence caution" evidence="4">
    <conflict type="erroneous gene model prediction">
        <sequence resource="EMBL-CDS" id="AAG50707"/>
    </conflict>
</comment>
<comment type="sequence caution" evidence="4">
    <conflict type="erroneous gene model prediction">
        <sequence resource="EMBL-CDS" id="AAG50756"/>
    </conflict>
    <text>The predicted gene At1g58190 has been split into 2 genes: At1g58190 and At1g58195.</text>
</comment>
<comment type="sequence caution" evidence="4">
    <conflict type="erroneous gene model prediction">
        <sequence resource="EMBL-CDS" id="AEE33511"/>
    </conflict>
    <text>The predicted gene At1g58190 has been split into 2 genes: At1g58190 and At1g58195.</text>
</comment>
<gene>
    <name evidence="4" type="primary">RLP9A</name>
    <name evidence="3" type="synonym">RLP9</name>
    <name evidence="5" type="ordered locus">At1g58190</name>
    <name evidence="6" type="ORF">T15M6.19</name>
    <name evidence="7" type="ORF">T18I24.10</name>
</gene>
<name>RLP9A_ARATH</name>
<accession>F4I9S3</accession>
<accession>F4I9S2</accession>
<accession>Q8GZ49</accession>
<accession>Q9C6F4</accession>
<accession>Q9C6R1</accession>